<evidence type="ECO:0000250" key="1"/>
<evidence type="ECO:0000250" key="2">
    <source>
        <dbReference type="UniProtKB" id="Q99380"/>
    </source>
</evidence>
<evidence type="ECO:0000255" key="3"/>
<evidence type="ECO:0000305" key="4"/>
<gene>
    <name type="primary">OST4B</name>
    <name type="ordered locus">At5g02502</name>
    <name type="ORF">T22P11</name>
</gene>
<comment type="function">
    <text evidence="2">Subunit of the oligosaccharyl transferase (OST) complex that catalyzes the initial transfer of a defined glycan (Glc(3)Man(9)GlcNAc(2) in eukaryotes) from the lipid carrier dolichol-pyrophosphate to an asparagine residue within an Asn-X-Ser/Thr consensus motif in nascent polypeptide chains, the first step in protein N-glycosylation. N-glycosylation occurs cotranslationally and the complex associates with the Sec61 complex at the channel-forming translocon complex that mediates protein translocation across the endoplasmic reticulum (ER). All subunits are required for a maximal enzyme activity.</text>
</comment>
<comment type="subunit">
    <text evidence="2">Component of the oligosaccharyltransferase (OST) complex.</text>
</comment>
<comment type="subcellular location">
    <subcellularLocation>
        <location evidence="1">Endoplasmic reticulum membrane</location>
        <topology evidence="1">Single-pass type III membrane protein</topology>
    </subcellularLocation>
</comment>
<comment type="similarity">
    <text evidence="4">Belongs to the OST4 family.</text>
</comment>
<proteinExistence type="inferred from homology"/>
<name>OST4B_ARATH</name>
<keyword id="KW-0256">Endoplasmic reticulum</keyword>
<keyword id="KW-0472">Membrane</keyword>
<keyword id="KW-1185">Reference proteome</keyword>
<keyword id="KW-0735">Signal-anchor</keyword>
<keyword id="KW-0812">Transmembrane</keyword>
<keyword id="KW-1133">Transmembrane helix</keyword>
<protein>
    <recommendedName>
        <fullName>Dolichyl-diphosphooligosaccharide--protein glycosyltransferase subunit 4B</fullName>
    </recommendedName>
</protein>
<accession>Q8L986</accession>
<feature type="chain" id="PRO_0000420819" description="Dolichyl-diphosphooligosaccharide--protein glycosyltransferase subunit 4B">
    <location>
        <begin position="1"/>
        <end position="35"/>
    </location>
</feature>
<feature type="topological domain" description="Lumenal" evidence="3">
    <location>
        <begin position="1"/>
        <end position="8"/>
    </location>
</feature>
<feature type="transmembrane region" description="Helical" evidence="3">
    <location>
        <begin position="9"/>
        <end position="29"/>
    </location>
</feature>
<feature type="topological domain" description="Cytoplasmic" evidence="3">
    <location>
        <begin position="30"/>
        <end position="35"/>
    </location>
</feature>
<dbReference type="EMBL" id="AL162971">
    <property type="status" value="NOT_ANNOTATED_CDS"/>
    <property type="molecule type" value="Genomic_DNA"/>
</dbReference>
<dbReference type="EMBL" id="CP002688">
    <property type="protein sequence ID" value="AED90482.1"/>
    <property type="molecule type" value="Genomic_DNA"/>
</dbReference>
<dbReference type="EMBL" id="BT025299">
    <property type="protein sequence ID" value="ABF47115.1"/>
    <property type="molecule type" value="mRNA"/>
</dbReference>
<dbReference type="EMBL" id="AY088582">
    <property type="protein sequence ID" value="AAM67258.1"/>
    <property type="molecule type" value="mRNA"/>
</dbReference>
<dbReference type="RefSeq" id="NP_680138.1">
    <property type="nucleotide sequence ID" value="NM_147833.1"/>
</dbReference>
<dbReference type="SMR" id="Q8L986"/>
<dbReference type="FunCoup" id="Q8L986">
    <property type="interactions" value="8"/>
</dbReference>
<dbReference type="STRING" id="3702.Q8L986"/>
<dbReference type="PaxDb" id="3702-AT5G02502.1"/>
<dbReference type="EnsemblPlants" id="AT5G02502.1">
    <property type="protein sequence ID" value="AT5G02502.1"/>
    <property type="gene ID" value="AT5G02502"/>
</dbReference>
<dbReference type="GeneID" id="831912"/>
<dbReference type="Gramene" id="AT5G02502.1">
    <property type="protein sequence ID" value="AT5G02502.1"/>
    <property type="gene ID" value="AT5G02502"/>
</dbReference>
<dbReference type="KEGG" id="ath:AT5G02502"/>
<dbReference type="Araport" id="AT5G02502"/>
<dbReference type="TAIR" id="AT5G02502"/>
<dbReference type="HOGENOM" id="CLU_186352_1_1_1"/>
<dbReference type="InParanoid" id="Q8L986"/>
<dbReference type="OrthoDB" id="2124077at2759"/>
<dbReference type="PhylomeDB" id="Q8L986"/>
<dbReference type="PRO" id="PR:Q8L986"/>
<dbReference type="Proteomes" id="UP000006548">
    <property type="component" value="Chromosome 5"/>
</dbReference>
<dbReference type="ExpressionAtlas" id="Q8L986">
    <property type="expression patterns" value="baseline and differential"/>
</dbReference>
<dbReference type="GO" id="GO:0005789">
    <property type="term" value="C:endoplasmic reticulum membrane"/>
    <property type="evidence" value="ECO:0007669"/>
    <property type="project" value="UniProtKB-SubCell"/>
</dbReference>
<dbReference type="InterPro" id="IPR018943">
    <property type="entry name" value="Oligosaccaryltransferase"/>
</dbReference>
<dbReference type="InterPro" id="IPR044165">
    <property type="entry name" value="OST4_plant"/>
</dbReference>
<dbReference type="InterPro" id="IPR036330">
    <property type="entry name" value="Ost4p_sf"/>
</dbReference>
<dbReference type="PANTHER" id="PTHR28677">
    <property type="entry name" value="DOLICHYL-DIPHOSPHOOLIGOSACCHARIDE--PROTEIN GLYCOSYLTRANSFERASE SUBUNIT 4A-RELATED"/>
    <property type="match status" value="1"/>
</dbReference>
<dbReference type="PANTHER" id="PTHR28677:SF4">
    <property type="entry name" value="DOLICHYL-DIPHOSPHOOLIGOSACCHARIDE--PROTEIN GLYCOSYLTRANSFERASE SUBUNIT 4B-RELATED"/>
    <property type="match status" value="1"/>
</dbReference>
<dbReference type="Pfam" id="PF10215">
    <property type="entry name" value="Ost4"/>
    <property type="match status" value="1"/>
</dbReference>
<dbReference type="SUPFAM" id="SSF103464">
    <property type="entry name" value="Oligosaccharyltransferase subunit ost4p"/>
    <property type="match status" value="1"/>
</dbReference>
<reference key="1">
    <citation type="journal article" date="2000" name="Nature">
        <title>Sequence and analysis of chromosome 5 of the plant Arabidopsis thaliana.</title>
        <authorList>
            <person name="Tabata S."/>
            <person name="Kaneko T."/>
            <person name="Nakamura Y."/>
            <person name="Kotani H."/>
            <person name="Kato T."/>
            <person name="Asamizu E."/>
            <person name="Miyajima N."/>
            <person name="Sasamoto S."/>
            <person name="Kimura T."/>
            <person name="Hosouchi T."/>
            <person name="Kawashima K."/>
            <person name="Kohara M."/>
            <person name="Matsumoto M."/>
            <person name="Matsuno A."/>
            <person name="Muraki A."/>
            <person name="Nakayama S."/>
            <person name="Nakazaki N."/>
            <person name="Naruo K."/>
            <person name="Okumura S."/>
            <person name="Shinpo S."/>
            <person name="Takeuchi C."/>
            <person name="Wada T."/>
            <person name="Watanabe A."/>
            <person name="Yamada M."/>
            <person name="Yasuda M."/>
            <person name="Sato S."/>
            <person name="de la Bastide M."/>
            <person name="Huang E."/>
            <person name="Spiegel L."/>
            <person name="Gnoj L."/>
            <person name="O'Shaughnessy A."/>
            <person name="Preston R."/>
            <person name="Habermann K."/>
            <person name="Murray J."/>
            <person name="Johnson D."/>
            <person name="Rohlfing T."/>
            <person name="Nelson J."/>
            <person name="Stoneking T."/>
            <person name="Pepin K."/>
            <person name="Spieth J."/>
            <person name="Sekhon M."/>
            <person name="Armstrong J."/>
            <person name="Becker M."/>
            <person name="Belter E."/>
            <person name="Cordum H."/>
            <person name="Cordes M."/>
            <person name="Courtney L."/>
            <person name="Courtney W."/>
            <person name="Dante M."/>
            <person name="Du H."/>
            <person name="Edwards J."/>
            <person name="Fryman J."/>
            <person name="Haakensen B."/>
            <person name="Lamar E."/>
            <person name="Latreille P."/>
            <person name="Leonard S."/>
            <person name="Meyer R."/>
            <person name="Mulvaney E."/>
            <person name="Ozersky P."/>
            <person name="Riley A."/>
            <person name="Strowmatt C."/>
            <person name="Wagner-McPherson C."/>
            <person name="Wollam A."/>
            <person name="Yoakum M."/>
            <person name="Bell M."/>
            <person name="Dedhia N."/>
            <person name="Parnell L."/>
            <person name="Shah R."/>
            <person name="Rodriguez M."/>
            <person name="Hoon See L."/>
            <person name="Vil D."/>
            <person name="Baker J."/>
            <person name="Kirchoff K."/>
            <person name="Toth K."/>
            <person name="King L."/>
            <person name="Bahret A."/>
            <person name="Miller B."/>
            <person name="Marra M.A."/>
            <person name="Martienssen R."/>
            <person name="McCombie W.R."/>
            <person name="Wilson R.K."/>
            <person name="Murphy G."/>
            <person name="Bancroft I."/>
            <person name="Volckaert G."/>
            <person name="Wambutt R."/>
            <person name="Duesterhoeft A."/>
            <person name="Stiekema W."/>
            <person name="Pohl T."/>
            <person name="Entian K.-D."/>
            <person name="Terryn N."/>
            <person name="Hartley N."/>
            <person name="Bent E."/>
            <person name="Johnson S."/>
            <person name="Langham S.-A."/>
            <person name="McCullagh B."/>
            <person name="Robben J."/>
            <person name="Grymonprez B."/>
            <person name="Zimmermann W."/>
            <person name="Ramsperger U."/>
            <person name="Wedler H."/>
            <person name="Balke K."/>
            <person name="Wedler E."/>
            <person name="Peters S."/>
            <person name="van Staveren M."/>
            <person name="Dirkse W."/>
            <person name="Mooijman P."/>
            <person name="Klein Lankhorst R."/>
            <person name="Weitzenegger T."/>
            <person name="Bothe G."/>
            <person name="Rose M."/>
            <person name="Hauf J."/>
            <person name="Berneiser S."/>
            <person name="Hempel S."/>
            <person name="Feldpausch M."/>
            <person name="Lamberth S."/>
            <person name="Villarroel R."/>
            <person name="Gielen J."/>
            <person name="Ardiles W."/>
            <person name="Bents O."/>
            <person name="Lemcke K."/>
            <person name="Kolesov G."/>
            <person name="Mayer K.F.X."/>
            <person name="Rudd S."/>
            <person name="Schoof H."/>
            <person name="Schueller C."/>
            <person name="Zaccaria P."/>
            <person name="Mewes H.-W."/>
            <person name="Bevan M."/>
            <person name="Fransz P.F."/>
        </authorList>
    </citation>
    <scope>NUCLEOTIDE SEQUENCE [LARGE SCALE GENOMIC DNA]</scope>
    <source>
        <strain>cv. Columbia</strain>
    </source>
</reference>
<reference key="2">
    <citation type="journal article" date="2017" name="Plant J.">
        <title>Araport11: a complete reannotation of the Arabidopsis thaliana reference genome.</title>
        <authorList>
            <person name="Cheng C.Y."/>
            <person name="Krishnakumar V."/>
            <person name="Chan A.P."/>
            <person name="Thibaud-Nissen F."/>
            <person name="Schobel S."/>
            <person name="Town C.D."/>
        </authorList>
    </citation>
    <scope>GENOME REANNOTATION</scope>
    <source>
        <strain>cv. Columbia</strain>
    </source>
</reference>
<reference key="3">
    <citation type="submission" date="2006-05" db="EMBL/GenBank/DDBJ databases">
        <title>Arabidopsis ORF clones.</title>
        <authorList>
            <person name="Shinn P."/>
            <person name="Chen H."/>
            <person name="Kim C.J."/>
            <person name="Quinitio C."/>
            <person name="Ecker J.R."/>
        </authorList>
    </citation>
    <scope>NUCLEOTIDE SEQUENCE [LARGE SCALE MRNA]</scope>
    <source>
        <strain>cv. Columbia</strain>
    </source>
</reference>
<reference key="4">
    <citation type="submission" date="2002-03" db="EMBL/GenBank/DDBJ databases">
        <title>Full-length cDNA from Arabidopsis thaliana.</title>
        <authorList>
            <person name="Brover V.V."/>
            <person name="Troukhan M.E."/>
            <person name="Alexandrov N.A."/>
            <person name="Lu Y.-P."/>
            <person name="Flavell R.B."/>
            <person name="Feldmann K.A."/>
        </authorList>
    </citation>
    <scope>NUCLEOTIDE SEQUENCE [LARGE SCALE MRNA]</scope>
</reference>
<sequence length="35" mass="4133">MFDDQDLGFFANFLGIFIFIMVIAYHFVVAEPKFE</sequence>
<organism>
    <name type="scientific">Arabidopsis thaliana</name>
    <name type="common">Mouse-ear cress</name>
    <dbReference type="NCBI Taxonomy" id="3702"/>
    <lineage>
        <taxon>Eukaryota</taxon>
        <taxon>Viridiplantae</taxon>
        <taxon>Streptophyta</taxon>
        <taxon>Embryophyta</taxon>
        <taxon>Tracheophyta</taxon>
        <taxon>Spermatophyta</taxon>
        <taxon>Magnoliopsida</taxon>
        <taxon>eudicotyledons</taxon>
        <taxon>Gunneridae</taxon>
        <taxon>Pentapetalae</taxon>
        <taxon>rosids</taxon>
        <taxon>malvids</taxon>
        <taxon>Brassicales</taxon>
        <taxon>Brassicaceae</taxon>
        <taxon>Camelineae</taxon>
        <taxon>Arabidopsis</taxon>
    </lineage>
</organism>